<comment type="function">
    <text>Catalyzes the last step of tRNA splicing, the transfer of the splice junction 2'-phosphate from ligated tRNA to NAD to produce ADP-ribose 1''-2'' cyclic phosphate.</text>
</comment>
<comment type="catalytic activity">
    <reaction>
        <text>2'-phospho-[ligated tRNA] + NAD(+) = mature tRNA + ADP-alpha-D-ribose 1'',2''-cyclic phosphate + nicotinamide</text>
        <dbReference type="Rhea" id="RHEA:23324"/>
        <dbReference type="Rhea" id="RHEA-COMP:11106"/>
        <dbReference type="Rhea" id="RHEA-COMP:11107"/>
        <dbReference type="ChEBI" id="CHEBI:17154"/>
        <dbReference type="ChEBI" id="CHEBI:57540"/>
        <dbReference type="ChEBI" id="CHEBI:76596"/>
        <dbReference type="ChEBI" id="CHEBI:82883"/>
        <dbReference type="ChEBI" id="CHEBI:85027"/>
        <dbReference type="EC" id="2.7.1.160"/>
    </reaction>
</comment>
<comment type="similarity">
    <text evidence="2">Belongs to the KptA/TPT1 family.</text>
</comment>
<name>TRPT1_DANRE</name>
<evidence type="ECO:0000256" key="1">
    <source>
        <dbReference type="SAM" id="MobiDB-lite"/>
    </source>
</evidence>
<evidence type="ECO:0000305" key="2"/>
<protein>
    <recommendedName>
        <fullName>tRNA 2'-phosphotransferase 1</fullName>
        <ecNumber>2.7.1.160</ecNumber>
    </recommendedName>
</protein>
<proteinExistence type="evidence at transcript level"/>
<accession>Q5EAR5</accession>
<feature type="chain" id="PRO_0000273365" description="tRNA 2'-phosphotransferase 1">
    <location>
        <begin position="1"/>
        <end position="225"/>
    </location>
</feature>
<feature type="region of interest" description="Disordered" evidence="1">
    <location>
        <begin position="1"/>
        <end position="21"/>
    </location>
</feature>
<reference key="1">
    <citation type="submission" date="2008-11" db="EMBL/GenBank/DDBJ databases">
        <authorList>
            <consortium name="NIH - Zebrafish Gene Collection (ZGC) project"/>
        </authorList>
    </citation>
    <scope>NUCLEOTIDE SEQUENCE [LARGE SCALE MRNA]</scope>
    <source>
        <tissue>Embryo</tissue>
    </source>
</reference>
<gene>
    <name type="primary">trpt1</name>
    <name type="ORF">zgc:113138</name>
</gene>
<dbReference type="EC" id="2.7.1.160"/>
<dbReference type="EMBL" id="BC090282">
    <property type="protein sequence ID" value="AAH90282.2"/>
    <property type="molecule type" value="mRNA"/>
</dbReference>
<dbReference type="RefSeq" id="NP_001013309.2">
    <property type="nucleotide sequence ID" value="NM_001013291.3"/>
</dbReference>
<dbReference type="SMR" id="Q5EAR5"/>
<dbReference type="FunCoup" id="Q5EAR5">
    <property type="interactions" value="423"/>
</dbReference>
<dbReference type="STRING" id="7955.ENSDARP00000054802"/>
<dbReference type="PaxDb" id="7955-ENSDARP00000054802"/>
<dbReference type="Ensembl" id="ENSDART00000054803">
    <property type="protein sequence ID" value="ENSDARP00000054802"/>
    <property type="gene ID" value="ENSDARG00000037628"/>
</dbReference>
<dbReference type="GeneID" id="503604"/>
<dbReference type="KEGG" id="dre:503604"/>
<dbReference type="AGR" id="ZFIN:ZDB-GENE-050227-16"/>
<dbReference type="CTD" id="83707"/>
<dbReference type="ZFIN" id="ZDB-GENE-050227-16">
    <property type="gene designation" value="trpt1"/>
</dbReference>
<dbReference type="eggNOG" id="KOG2278">
    <property type="taxonomic scope" value="Eukaryota"/>
</dbReference>
<dbReference type="InParanoid" id="Q5EAR5"/>
<dbReference type="OMA" id="RHGASQM"/>
<dbReference type="OrthoDB" id="419694at2759"/>
<dbReference type="PhylomeDB" id="Q5EAR5"/>
<dbReference type="TreeFam" id="TF324127"/>
<dbReference type="PRO" id="PR:Q5EAR5"/>
<dbReference type="Proteomes" id="UP000000437">
    <property type="component" value="Chromosome 14"/>
</dbReference>
<dbReference type="Bgee" id="ENSDARG00000037628">
    <property type="expression patterns" value="Expressed in testis and 26 other cell types or tissues"/>
</dbReference>
<dbReference type="ExpressionAtlas" id="Q5EAR5">
    <property type="expression patterns" value="baseline and differential"/>
</dbReference>
<dbReference type="GO" id="GO:0000215">
    <property type="term" value="F:tRNA 2'-phosphotransferase activity"/>
    <property type="evidence" value="ECO:0000318"/>
    <property type="project" value="GO_Central"/>
</dbReference>
<dbReference type="GO" id="GO:0006388">
    <property type="term" value="P:tRNA splicing, via endonucleolytic cleavage and ligation"/>
    <property type="evidence" value="ECO:0000318"/>
    <property type="project" value="GO_Central"/>
</dbReference>
<dbReference type="Gene3D" id="3.20.170.30">
    <property type="match status" value="1"/>
</dbReference>
<dbReference type="Gene3D" id="1.10.10.970">
    <property type="entry name" value="RNA 2'-phosphotransferase, Tpt1/KptA family, N-terminal domain"/>
    <property type="match status" value="1"/>
</dbReference>
<dbReference type="InterPro" id="IPR002745">
    <property type="entry name" value="Ptrans_KptA/Tpt1"/>
</dbReference>
<dbReference type="InterPro" id="IPR042081">
    <property type="entry name" value="RNA_2'-PTrans_C"/>
</dbReference>
<dbReference type="InterPro" id="IPR042080">
    <property type="entry name" value="RNA_2'-PTrans_N"/>
</dbReference>
<dbReference type="PANTHER" id="PTHR12684">
    <property type="entry name" value="PUTATIVE PHOSPHOTRANSFERASE"/>
    <property type="match status" value="1"/>
</dbReference>
<dbReference type="PANTHER" id="PTHR12684:SF2">
    <property type="entry name" value="TRNA 2'-PHOSPHOTRANSFERASE 1"/>
    <property type="match status" value="1"/>
</dbReference>
<dbReference type="Pfam" id="PF01885">
    <property type="entry name" value="PTS_2-RNA"/>
    <property type="match status" value="1"/>
</dbReference>
<dbReference type="SUPFAM" id="SSF56399">
    <property type="entry name" value="ADP-ribosylation"/>
    <property type="match status" value="1"/>
</dbReference>
<organism>
    <name type="scientific">Danio rerio</name>
    <name type="common">Zebrafish</name>
    <name type="synonym">Brachydanio rerio</name>
    <dbReference type="NCBI Taxonomy" id="7955"/>
    <lineage>
        <taxon>Eukaryota</taxon>
        <taxon>Metazoa</taxon>
        <taxon>Chordata</taxon>
        <taxon>Craniata</taxon>
        <taxon>Vertebrata</taxon>
        <taxon>Euteleostomi</taxon>
        <taxon>Actinopterygii</taxon>
        <taxon>Neopterygii</taxon>
        <taxon>Teleostei</taxon>
        <taxon>Ostariophysi</taxon>
        <taxon>Cypriniformes</taxon>
        <taxon>Danionidae</taxon>
        <taxon>Danioninae</taxon>
        <taxon>Danio</taxon>
    </lineage>
</organism>
<sequence length="225" mass="25539">MDCETRGRGRRGRGNRNEESRDVRLSKSLSYVLRHGASKMGLQMNSDGFVFVEELLAHQQFRSFSVDDVERVVASNDKQRFKLCKHPEDDRLQIRANQGHSVQVTDLELREISQDDQDYPREAVHGSYMKHWPSIRSQGLSRMNRTHIHLAPGLPGEGRVISGMRQSCDLAVYIDVTKAMSDGIKFFWSENGVLLTPGDAAGILAPCYFSRAQRLKPLPCDIELH</sequence>
<keyword id="KW-0520">NAD</keyword>
<keyword id="KW-1185">Reference proteome</keyword>
<keyword id="KW-0808">Transferase</keyword>
<keyword id="KW-0819">tRNA processing</keyword>